<comment type="function">
    <text evidence="1">Catalyzes the transfer of a methyl group from 5-methyltetrahydrofolate to homocysteine resulting in methionine formation.</text>
</comment>
<comment type="catalytic activity">
    <reaction evidence="1">
        <text>5-methyltetrahydropteroyltri-L-glutamate + L-homocysteine = tetrahydropteroyltri-L-glutamate + L-methionine</text>
        <dbReference type="Rhea" id="RHEA:21196"/>
        <dbReference type="ChEBI" id="CHEBI:57844"/>
        <dbReference type="ChEBI" id="CHEBI:58140"/>
        <dbReference type="ChEBI" id="CHEBI:58199"/>
        <dbReference type="ChEBI" id="CHEBI:58207"/>
        <dbReference type="EC" id="2.1.1.14"/>
    </reaction>
</comment>
<comment type="cofactor">
    <cofactor evidence="1">
        <name>Zn(2+)</name>
        <dbReference type="ChEBI" id="CHEBI:29105"/>
    </cofactor>
    <text evidence="1">Binds 1 zinc ion per subunit.</text>
</comment>
<comment type="pathway">
    <text evidence="1">Amino-acid biosynthesis; L-methionine biosynthesis via de novo pathway; L-methionine from L-homocysteine (MetE route): step 1/1.</text>
</comment>
<comment type="similarity">
    <text evidence="1">Belongs to the vitamin-B12 independent methionine synthase family.</text>
</comment>
<proteinExistence type="inferred from homology"/>
<dbReference type="EC" id="2.1.1.14" evidence="1"/>
<dbReference type="EMBL" id="BX950851">
    <property type="protein sequence ID" value="CAG73100.1"/>
    <property type="molecule type" value="Genomic_DNA"/>
</dbReference>
<dbReference type="RefSeq" id="WP_011091820.1">
    <property type="nucleotide sequence ID" value="NC_004547.2"/>
</dbReference>
<dbReference type="SMR" id="Q6DAS2"/>
<dbReference type="STRING" id="218491.ECA0181"/>
<dbReference type="KEGG" id="eca:ECA0181"/>
<dbReference type="PATRIC" id="fig|218491.5.peg.180"/>
<dbReference type="eggNOG" id="COG0620">
    <property type="taxonomic scope" value="Bacteria"/>
</dbReference>
<dbReference type="HOGENOM" id="CLU_013175_0_0_6"/>
<dbReference type="OrthoDB" id="244285at2"/>
<dbReference type="UniPathway" id="UPA00051">
    <property type="reaction ID" value="UER00082"/>
</dbReference>
<dbReference type="Proteomes" id="UP000007966">
    <property type="component" value="Chromosome"/>
</dbReference>
<dbReference type="GO" id="GO:0003871">
    <property type="term" value="F:5-methyltetrahydropteroyltriglutamate-homocysteine S-methyltransferase activity"/>
    <property type="evidence" value="ECO:0007669"/>
    <property type="project" value="UniProtKB-UniRule"/>
</dbReference>
<dbReference type="GO" id="GO:0008270">
    <property type="term" value="F:zinc ion binding"/>
    <property type="evidence" value="ECO:0007669"/>
    <property type="project" value="InterPro"/>
</dbReference>
<dbReference type="GO" id="GO:0009086">
    <property type="term" value="P:methionine biosynthetic process"/>
    <property type="evidence" value="ECO:0007669"/>
    <property type="project" value="UniProtKB-UniRule"/>
</dbReference>
<dbReference type="GO" id="GO:0032259">
    <property type="term" value="P:methylation"/>
    <property type="evidence" value="ECO:0007669"/>
    <property type="project" value="UniProtKB-KW"/>
</dbReference>
<dbReference type="CDD" id="cd03311">
    <property type="entry name" value="CIMS_C_terminal_like"/>
    <property type="match status" value="1"/>
</dbReference>
<dbReference type="CDD" id="cd03312">
    <property type="entry name" value="CIMS_N_terminal_like"/>
    <property type="match status" value="1"/>
</dbReference>
<dbReference type="FunFam" id="3.20.20.210:FF:000002">
    <property type="entry name" value="5-methyltetrahydropteroyltriglutamate--homocysteine methyltransferase"/>
    <property type="match status" value="1"/>
</dbReference>
<dbReference type="FunFam" id="3.20.20.210:FF:000003">
    <property type="entry name" value="5-methyltetrahydropteroyltriglutamate--homocysteine methyltransferase"/>
    <property type="match status" value="1"/>
</dbReference>
<dbReference type="Gene3D" id="3.20.20.210">
    <property type="match status" value="2"/>
</dbReference>
<dbReference type="HAMAP" id="MF_00172">
    <property type="entry name" value="Meth_synth"/>
    <property type="match status" value="1"/>
</dbReference>
<dbReference type="InterPro" id="IPR013215">
    <property type="entry name" value="Cbl-indep_Met_Synth_N"/>
</dbReference>
<dbReference type="InterPro" id="IPR006276">
    <property type="entry name" value="Cobalamin-indep_Met_synthase"/>
</dbReference>
<dbReference type="InterPro" id="IPR002629">
    <property type="entry name" value="Met_Synth_C/arc"/>
</dbReference>
<dbReference type="InterPro" id="IPR038071">
    <property type="entry name" value="UROD/MetE-like_sf"/>
</dbReference>
<dbReference type="NCBIfam" id="TIGR01371">
    <property type="entry name" value="met_syn_B12ind"/>
    <property type="match status" value="1"/>
</dbReference>
<dbReference type="NCBIfam" id="NF003556">
    <property type="entry name" value="PRK05222.1"/>
    <property type="match status" value="1"/>
</dbReference>
<dbReference type="PANTHER" id="PTHR30519">
    <property type="entry name" value="5-METHYLTETRAHYDROPTEROYLTRIGLUTAMATE--HOMOCYSTEINE METHYLTRANSFERASE"/>
    <property type="match status" value="1"/>
</dbReference>
<dbReference type="Pfam" id="PF08267">
    <property type="entry name" value="Meth_synt_1"/>
    <property type="match status" value="1"/>
</dbReference>
<dbReference type="Pfam" id="PF01717">
    <property type="entry name" value="Meth_synt_2"/>
    <property type="match status" value="1"/>
</dbReference>
<dbReference type="PIRSF" id="PIRSF000382">
    <property type="entry name" value="MeTrfase_B12_ind"/>
    <property type="match status" value="1"/>
</dbReference>
<dbReference type="SUPFAM" id="SSF51726">
    <property type="entry name" value="UROD/MetE-like"/>
    <property type="match status" value="2"/>
</dbReference>
<reference key="1">
    <citation type="journal article" date="2004" name="Proc. Natl. Acad. Sci. U.S.A.">
        <title>Genome sequence of the enterobacterial phytopathogen Erwinia carotovora subsp. atroseptica and characterization of virulence factors.</title>
        <authorList>
            <person name="Bell K.S."/>
            <person name="Sebaihia M."/>
            <person name="Pritchard L."/>
            <person name="Holden M.T.G."/>
            <person name="Hyman L.J."/>
            <person name="Holeva M.C."/>
            <person name="Thomson N.R."/>
            <person name="Bentley S.D."/>
            <person name="Churcher L.J.C."/>
            <person name="Mungall K."/>
            <person name="Atkin R."/>
            <person name="Bason N."/>
            <person name="Brooks K."/>
            <person name="Chillingworth T."/>
            <person name="Clark K."/>
            <person name="Doggett J."/>
            <person name="Fraser A."/>
            <person name="Hance Z."/>
            <person name="Hauser H."/>
            <person name="Jagels K."/>
            <person name="Moule S."/>
            <person name="Norbertczak H."/>
            <person name="Ormond D."/>
            <person name="Price C."/>
            <person name="Quail M.A."/>
            <person name="Sanders M."/>
            <person name="Walker D."/>
            <person name="Whitehead S."/>
            <person name="Salmond G.P.C."/>
            <person name="Birch P.R.J."/>
            <person name="Parkhill J."/>
            <person name="Toth I.K."/>
        </authorList>
    </citation>
    <scope>NUCLEOTIDE SEQUENCE [LARGE SCALE GENOMIC DNA]</scope>
    <source>
        <strain>SCRI 1043 / ATCC BAA-672</strain>
    </source>
</reference>
<feature type="chain" id="PRO_1000017244" description="5-methyltetrahydropteroyltriglutamate--homocysteine methyltransferase">
    <location>
        <begin position="1"/>
        <end position="754"/>
    </location>
</feature>
<feature type="active site" description="Proton donor" evidence="1">
    <location>
        <position position="694"/>
    </location>
</feature>
<feature type="binding site" evidence="1">
    <location>
        <begin position="17"/>
        <end position="20"/>
    </location>
    <ligand>
        <name>5-methyltetrahydropteroyltri-L-glutamate</name>
        <dbReference type="ChEBI" id="CHEBI:58207"/>
    </ligand>
</feature>
<feature type="binding site" evidence="1">
    <location>
        <position position="117"/>
    </location>
    <ligand>
        <name>5-methyltetrahydropteroyltri-L-glutamate</name>
        <dbReference type="ChEBI" id="CHEBI:58207"/>
    </ligand>
</feature>
<feature type="binding site" evidence="1">
    <location>
        <begin position="431"/>
        <end position="433"/>
    </location>
    <ligand>
        <name>L-homocysteine</name>
        <dbReference type="ChEBI" id="CHEBI:58199"/>
    </ligand>
</feature>
<feature type="binding site" evidence="1">
    <location>
        <begin position="431"/>
        <end position="433"/>
    </location>
    <ligand>
        <name>L-methionine</name>
        <dbReference type="ChEBI" id="CHEBI:57844"/>
    </ligand>
</feature>
<feature type="binding site" evidence="1">
    <location>
        <position position="484"/>
    </location>
    <ligand>
        <name>L-homocysteine</name>
        <dbReference type="ChEBI" id="CHEBI:58199"/>
    </ligand>
</feature>
<feature type="binding site" evidence="1">
    <location>
        <position position="484"/>
    </location>
    <ligand>
        <name>L-methionine</name>
        <dbReference type="ChEBI" id="CHEBI:57844"/>
    </ligand>
</feature>
<feature type="binding site" evidence="1">
    <location>
        <begin position="515"/>
        <end position="516"/>
    </location>
    <ligand>
        <name>5-methyltetrahydropteroyltri-L-glutamate</name>
        <dbReference type="ChEBI" id="CHEBI:58207"/>
    </ligand>
</feature>
<feature type="binding site" evidence="1">
    <location>
        <position position="561"/>
    </location>
    <ligand>
        <name>5-methyltetrahydropteroyltri-L-glutamate</name>
        <dbReference type="ChEBI" id="CHEBI:58207"/>
    </ligand>
</feature>
<feature type="binding site" evidence="1">
    <location>
        <position position="599"/>
    </location>
    <ligand>
        <name>L-homocysteine</name>
        <dbReference type="ChEBI" id="CHEBI:58199"/>
    </ligand>
</feature>
<feature type="binding site" evidence="1">
    <location>
        <position position="599"/>
    </location>
    <ligand>
        <name>L-methionine</name>
        <dbReference type="ChEBI" id="CHEBI:57844"/>
    </ligand>
</feature>
<feature type="binding site" evidence="1">
    <location>
        <position position="605"/>
    </location>
    <ligand>
        <name>5-methyltetrahydropteroyltri-L-glutamate</name>
        <dbReference type="ChEBI" id="CHEBI:58207"/>
    </ligand>
</feature>
<feature type="binding site" evidence="1">
    <location>
        <position position="641"/>
    </location>
    <ligand>
        <name>Zn(2+)</name>
        <dbReference type="ChEBI" id="CHEBI:29105"/>
        <note>catalytic</note>
    </ligand>
</feature>
<feature type="binding site" evidence="1">
    <location>
        <position position="643"/>
    </location>
    <ligand>
        <name>Zn(2+)</name>
        <dbReference type="ChEBI" id="CHEBI:29105"/>
        <note>catalytic</note>
    </ligand>
</feature>
<feature type="binding site" evidence="1">
    <location>
        <position position="665"/>
    </location>
    <ligand>
        <name>Zn(2+)</name>
        <dbReference type="ChEBI" id="CHEBI:29105"/>
        <note>catalytic</note>
    </ligand>
</feature>
<feature type="binding site" evidence="1">
    <location>
        <position position="726"/>
    </location>
    <ligand>
        <name>Zn(2+)</name>
        <dbReference type="ChEBI" id="CHEBI:29105"/>
        <note>catalytic</note>
    </ligand>
</feature>
<keyword id="KW-0028">Amino-acid biosynthesis</keyword>
<keyword id="KW-0479">Metal-binding</keyword>
<keyword id="KW-0486">Methionine biosynthesis</keyword>
<keyword id="KW-0489">Methyltransferase</keyword>
<keyword id="KW-1185">Reference proteome</keyword>
<keyword id="KW-0677">Repeat</keyword>
<keyword id="KW-0808">Transferase</keyword>
<keyword id="KW-0862">Zinc</keyword>
<gene>
    <name evidence="1" type="primary">metE</name>
    <name type="ordered locus">ECA0181</name>
</gene>
<accession>Q6DAS2</accession>
<evidence type="ECO:0000255" key="1">
    <source>
        <dbReference type="HAMAP-Rule" id="MF_00172"/>
    </source>
</evidence>
<protein>
    <recommendedName>
        <fullName evidence="1">5-methyltetrahydropteroyltriglutamate--homocysteine methyltransferase</fullName>
        <ecNumber evidence="1">2.1.1.14</ecNumber>
    </recommendedName>
    <alternativeName>
        <fullName evidence="1">Cobalamin-independent methionine synthase</fullName>
    </alternativeName>
    <alternativeName>
        <fullName evidence="1">Methionine synthase, vitamin-B12 independent isozyme</fullName>
    </alternativeName>
</protein>
<name>METE_PECAS</name>
<sequence length="754" mass="84621">MAIVNHTLGFPRVGLRRELKKAQESYWAGNATQEELLTVGRELRARHWQQQKDAGVDLLPVGDFAWYDHVLTTSLLLGNVPARHQNEDGSVDLDTLFRIGRGRAPTGQPAAAAEMTKWFNTNYHYMVPEFTKGQQFKLTWTQLLDEVDEALALGHKVKPVLLGPVTYLWLGKVKGEQFDRLSLLQDILPVYQQVLAELTKRGIEWVQIDEPALALELSQEWLAAFKPAYDALQGQVKLLLTTYFDSVSQNLETIKALPVQGLHIDLVHGKDDAATLSAQLPANWVLSLGVINGRNVWRADLSNWFERLQPLVGTRDLWLGSSCSLLHSPIDLSVEVRLDDEVKSWFAFAIQKCAELSLLSQALNSGNGQALEAYSAPIRARRTSTRVNNVAVAQRLAAITAQDSQRQNVYSVRADAQRERFNLPAWPTTTIGSFPQTTEIRGLRLDFKQGRLDGNNYRTGIAEHIKQAVAEQERLGLDVLVHGEAERNDMVEYFGEHLDGFVFTQNGWVQSYGSRCVKPPVIIGDVSRPEAITVEWAKYAQSLTDKPMKGMLTGPVTILCWSFPREDVTRETIAKQIALALRDEVADLEAAGIGIIQIDEPALREGLPLHRSDWDAYLAWAVDAFRLNAAVAKDDTQIHTHMCYCEFNDIMDSIAALDADVITIETSRSDMELLESFEEFEYPNEIGPGVYDIHSPNVPSVEWMEALLKKAAQRIPAERLWVNPDCGLKTRGWPETRQALANMVQAAQRLRETQ</sequence>
<organism>
    <name type="scientific">Pectobacterium atrosepticum (strain SCRI 1043 / ATCC BAA-672)</name>
    <name type="common">Erwinia carotovora subsp. atroseptica</name>
    <dbReference type="NCBI Taxonomy" id="218491"/>
    <lineage>
        <taxon>Bacteria</taxon>
        <taxon>Pseudomonadati</taxon>
        <taxon>Pseudomonadota</taxon>
        <taxon>Gammaproteobacteria</taxon>
        <taxon>Enterobacterales</taxon>
        <taxon>Pectobacteriaceae</taxon>
        <taxon>Pectobacterium</taxon>
    </lineage>
</organism>